<protein>
    <recommendedName>
        <fullName evidence="2">Obg-like ATPase 1</fullName>
    </recommendedName>
</protein>
<dbReference type="EMBL" id="BX284601">
    <property type="protein sequence ID" value="CAB07131.1"/>
    <property type="molecule type" value="Genomic_DNA"/>
</dbReference>
<dbReference type="EMBL" id="BX284601">
    <property type="protein sequence ID" value="CBX25201.1"/>
    <property type="molecule type" value="Genomic_DNA"/>
</dbReference>
<dbReference type="PIR" id="T26288">
    <property type="entry name" value="T26288"/>
</dbReference>
<dbReference type="RefSeq" id="NP_001252138.1">
    <molecule id="P91917-2"/>
    <property type="nucleotide sequence ID" value="NM_001265209.3"/>
</dbReference>
<dbReference type="RefSeq" id="NP_001254006.1">
    <molecule id="P91917-1"/>
    <property type="nucleotide sequence ID" value="NM_001267077.3"/>
</dbReference>
<dbReference type="SMR" id="P91917"/>
<dbReference type="BioGRID" id="38600">
    <property type="interactions" value="11"/>
</dbReference>
<dbReference type="DIP" id="DIP-26051N"/>
<dbReference type="FunCoup" id="P91917">
    <property type="interactions" value="2532"/>
</dbReference>
<dbReference type="IntAct" id="P91917">
    <property type="interactions" value="1"/>
</dbReference>
<dbReference type="STRING" id="6239.W08E3.3a.1"/>
<dbReference type="PaxDb" id="6239-W08E3.3a"/>
<dbReference type="PeptideAtlas" id="P91917"/>
<dbReference type="EnsemblMetazoa" id="W08E3.3a.1">
    <molecule id="P91917-1"/>
    <property type="protein sequence ID" value="W08E3.3a.1"/>
    <property type="gene ID" value="WBGene00012344"/>
</dbReference>
<dbReference type="EnsemblMetazoa" id="W08E3.3a.2">
    <molecule id="P91917-1"/>
    <property type="protein sequence ID" value="W08E3.3a.2"/>
    <property type="gene ID" value="WBGene00012344"/>
</dbReference>
<dbReference type="EnsemblMetazoa" id="W08E3.3b.1">
    <molecule id="P91917-2"/>
    <property type="protein sequence ID" value="W08E3.3b.1"/>
    <property type="gene ID" value="WBGene00012344"/>
</dbReference>
<dbReference type="GeneID" id="173205"/>
<dbReference type="KEGG" id="cel:CELE_W08E3.3"/>
<dbReference type="UCSC" id="W08E3.3">
    <molecule id="P91917-1"/>
    <property type="organism name" value="c. elegans"/>
</dbReference>
<dbReference type="AGR" id="WB:WBGene00012344"/>
<dbReference type="CTD" id="173205"/>
<dbReference type="WormBase" id="W08E3.3a">
    <molecule id="P91917-1"/>
    <property type="protein sequence ID" value="CE14708"/>
    <property type="gene ID" value="WBGene00012344"/>
    <property type="gene designation" value="ola-1"/>
</dbReference>
<dbReference type="WormBase" id="W08E3.3b">
    <molecule id="P91917-2"/>
    <property type="protein sequence ID" value="CE45385"/>
    <property type="gene ID" value="WBGene00012344"/>
    <property type="gene designation" value="ola-1"/>
</dbReference>
<dbReference type="eggNOG" id="KOG1491">
    <property type="taxonomic scope" value="Eukaryota"/>
</dbReference>
<dbReference type="GeneTree" id="ENSGT00390000000673"/>
<dbReference type="HOGENOM" id="CLU_018395_1_0_1"/>
<dbReference type="InParanoid" id="P91917"/>
<dbReference type="OMA" id="VLRCFDN"/>
<dbReference type="OrthoDB" id="424823at2759"/>
<dbReference type="PhylomeDB" id="P91917"/>
<dbReference type="Reactome" id="R-CEL-114608">
    <property type="pathway name" value="Platelet degranulation"/>
</dbReference>
<dbReference type="PRO" id="PR:P91917"/>
<dbReference type="Proteomes" id="UP000001940">
    <property type="component" value="Chromosome I"/>
</dbReference>
<dbReference type="Bgee" id="WBGene00012344">
    <property type="expression patterns" value="Expressed in larva and 4 other cell types or tissues"/>
</dbReference>
<dbReference type="ExpressionAtlas" id="P91917">
    <property type="expression patterns" value="baseline and differential"/>
</dbReference>
<dbReference type="GO" id="GO:0005737">
    <property type="term" value="C:cytoplasm"/>
    <property type="evidence" value="ECO:0000318"/>
    <property type="project" value="GO_Central"/>
</dbReference>
<dbReference type="GO" id="GO:0005783">
    <property type="term" value="C:endoplasmic reticulum"/>
    <property type="evidence" value="ECO:0007005"/>
    <property type="project" value="WormBase"/>
</dbReference>
<dbReference type="GO" id="GO:0005524">
    <property type="term" value="F:ATP binding"/>
    <property type="evidence" value="ECO:0007669"/>
    <property type="project" value="UniProtKB-UniRule"/>
</dbReference>
<dbReference type="GO" id="GO:0016887">
    <property type="term" value="F:ATP hydrolysis activity"/>
    <property type="evidence" value="ECO:0000318"/>
    <property type="project" value="GO_Central"/>
</dbReference>
<dbReference type="GO" id="GO:0005525">
    <property type="term" value="F:GTP binding"/>
    <property type="evidence" value="ECO:0007669"/>
    <property type="project" value="InterPro"/>
</dbReference>
<dbReference type="GO" id="GO:0046872">
    <property type="term" value="F:metal ion binding"/>
    <property type="evidence" value="ECO:0007669"/>
    <property type="project" value="UniProtKB-KW"/>
</dbReference>
<dbReference type="GO" id="GO:0043023">
    <property type="term" value="F:ribosomal large subunit binding"/>
    <property type="evidence" value="ECO:0007669"/>
    <property type="project" value="UniProtKB-UniRule"/>
</dbReference>
<dbReference type="GO" id="GO:0042595">
    <property type="term" value="P:behavioral response to starvation"/>
    <property type="evidence" value="ECO:0000315"/>
    <property type="project" value="UniProtKB"/>
</dbReference>
<dbReference type="GO" id="GO:0040040">
    <property type="term" value="P:thermosensory behavior"/>
    <property type="evidence" value="ECO:0000315"/>
    <property type="project" value="UniProtKB"/>
</dbReference>
<dbReference type="GO" id="GO:0043052">
    <property type="term" value="P:thermotaxis"/>
    <property type="evidence" value="ECO:0000315"/>
    <property type="project" value="UniProtKB"/>
</dbReference>
<dbReference type="CDD" id="cd04867">
    <property type="entry name" value="TGS_YchF_OLA1"/>
    <property type="match status" value="1"/>
</dbReference>
<dbReference type="CDD" id="cd01900">
    <property type="entry name" value="YchF"/>
    <property type="match status" value="1"/>
</dbReference>
<dbReference type="FunFam" id="1.10.150.300:FF:000003">
    <property type="entry name" value="Obg-like ATPase 1"/>
    <property type="match status" value="1"/>
</dbReference>
<dbReference type="FunFam" id="3.10.20.30:FF:000001">
    <property type="entry name" value="Ribosome-binding ATPase YchF"/>
    <property type="match status" value="1"/>
</dbReference>
<dbReference type="Gene3D" id="3.10.20.30">
    <property type="match status" value="1"/>
</dbReference>
<dbReference type="Gene3D" id="3.40.50.300">
    <property type="entry name" value="P-loop containing nucleotide triphosphate hydrolases"/>
    <property type="match status" value="1"/>
</dbReference>
<dbReference type="Gene3D" id="1.10.150.300">
    <property type="entry name" value="TGS-like domain"/>
    <property type="match status" value="1"/>
</dbReference>
<dbReference type="HAMAP" id="MF_00944">
    <property type="entry name" value="YchF_OLA1_ATPase"/>
    <property type="match status" value="1"/>
</dbReference>
<dbReference type="InterPro" id="IPR004396">
    <property type="entry name" value="ATPase_YchF/OLA1"/>
</dbReference>
<dbReference type="InterPro" id="IPR012675">
    <property type="entry name" value="Beta-grasp_dom_sf"/>
</dbReference>
<dbReference type="InterPro" id="IPR031167">
    <property type="entry name" value="G_OBG"/>
</dbReference>
<dbReference type="InterPro" id="IPR006073">
    <property type="entry name" value="GTP-bd"/>
</dbReference>
<dbReference type="InterPro" id="IPR027417">
    <property type="entry name" value="P-loop_NTPase"/>
</dbReference>
<dbReference type="InterPro" id="IPR004095">
    <property type="entry name" value="TGS"/>
</dbReference>
<dbReference type="InterPro" id="IPR012676">
    <property type="entry name" value="TGS-like"/>
</dbReference>
<dbReference type="InterPro" id="IPR023192">
    <property type="entry name" value="TGS-like_dom_sf"/>
</dbReference>
<dbReference type="InterPro" id="IPR013029">
    <property type="entry name" value="YchF_C"/>
</dbReference>
<dbReference type="InterPro" id="IPR041706">
    <property type="entry name" value="YchF_N"/>
</dbReference>
<dbReference type="NCBIfam" id="TIGR00092">
    <property type="entry name" value="redox-regulated ATPase YchF"/>
    <property type="match status" value="1"/>
</dbReference>
<dbReference type="PANTHER" id="PTHR23305">
    <property type="entry name" value="OBG GTPASE FAMILY"/>
    <property type="match status" value="1"/>
</dbReference>
<dbReference type="PANTHER" id="PTHR23305:SF11">
    <property type="entry name" value="OBG-LIKE ATPASE 1"/>
    <property type="match status" value="1"/>
</dbReference>
<dbReference type="Pfam" id="PF01926">
    <property type="entry name" value="MMR_HSR1"/>
    <property type="match status" value="1"/>
</dbReference>
<dbReference type="Pfam" id="PF06071">
    <property type="entry name" value="YchF-GTPase_C"/>
    <property type="match status" value="1"/>
</dbReference>
<dbReference type="PIRSF" id="PIRSF006641">
    <property type="entry name" value="CHP00092"/>
    <property type="match status" value="1"/>
</dbReference>
<dbReference type="PRINTS" id="PR00326">
    <property type="entry name" value="GTP1OBG"/>
</dbReference>
<dbReference type="SUPFAM" id="SSF52540">
    <property type="entry name" value="P-loop containing nucleoside triphosphate hydrolases"/>
    <property type="match status" value="1"/>
</dbReference>
<dbReference type="SUPFAM" id="SSF81271">
    <property type="entry name" value="TGS-like"/>
    <property type="match status" value="1"/>
</dbReference>
<dbReference type="PROSITE" id="PS51710">
    <property type="entry name" value="G_OBG"/>
    <property type="match status" value="1"/>
</dbReference>
<dbReference type="PROSITE" id="PS51880">
    <property type="entry name" value="TGS"/>
    <property type="match status" value="1"/>
</dbReference>
<accession>P91917</accession>
<accession>E2JL06</accession>
<feature type="chain" id="PRO_0000122460" description="Obg-like ATPase 1">
    <location>
        <begin position="1"/>
        <end position="395"/>
    </location>
</feature>
<feature type="domain" description="OBG-type G">
    <location>
        <begin position="22"/>
        <end position="280"/>
    </location>
</feature>
<feature type="domain" description="TGS" evidence="3">
    <location>
        <begin position="301"/>
        <end position="384"/>
    </location>
</feature>
<feature type="binding site" evidence="2">
    <location>
        <begin position="31"/>
        <end position="36"/>
    </location>
    <ligand>
        <name>ATP</name>
        <dbReference type="ChEBI" id="CHEBI:30616"/>
    </ligand>
</feature>
<feature type="binding site" evidence="1">
    <location>
        <position position="35"/>
    </location>
    <ligand>
        <name>Mg(2+)</name>
        <dbReference type="ChEBI" id="CHEBI:18420"/>
    </ligand>
</feature>
<feature type="binding site" evidence="1">
    <location>
        <position position="55"/>
    </location>
    <ligand>
        <name>Mg(2+)</name>
        <dbReference type="ChEBI" id="CHEBI:18420"/>
    </ligand>
</feature>
<feature type="binding site" evidence="2">
    <location>
        <position position="228"/>
    </location>
    <ligand>
        <name>ATP</name>
        <dbReference type="ChEBI" id="CHEBI:30616"/>
    </ligand>
</feature>
<feature type="splice variant" id="VSP_061661" description="In isoform b." evidence="5">
    <location>
        <begin position="1"/>
        <end position="270"/>
    </location>
</feature>
<name>OLA1_CAEEL</name>
<reference key="1">
    <citation type="journal article" date="1998" name="Science">
        <title>Genome sequence of the nematode C. elegans: a platform for investigating biology.</title>
        <authorList>
            <consortium name="The C. elegans sequencing consortium"/>
        </authorList>
    </citation>
    <scope>NUCLEOTIDE SEQUENCE [LARGE SCALE GENOMIC DNA]</scope>
    <source>
        <strain>Bristol N2</strain>
    </source>
</reference>
<reference key="2">
    <citation type="journal article" date="2022" name="PLoS Genet.">
        <title>OLA-1, an Obg-like ATPase, integrates hunger with temperature information in sensory neurons in C. elegans.</title>
        <authorList>
            <person name="Aoki I."/>
            <person name="Jurado P."/>
            <person name="Nawa K."/>
            <person name="Kondo R."/>
            <person name="Yamashiro R."/>
            <person name="Matsuyama H.J."/>
            <person name="Ferrer I."/>
            <person name="Nakano S."/>
            <person name="Mori I."/>
        </authorList>
    </citation>
    <scope>FUNCTION</scope>
    <scope>TISSUE SPECIFICITY</scope>
</reference>
<comment type="function">
    <text evidence="2 4">Hydrolyzes ATP, and can also hydrolyze GTP with lower efficiency. Has lower affinity for GTP. Plays a role in regulating starvation-induced thermotaxis responses in AFD thermosensory neurons (PubMed:35675262).</text>
</comment>
<comment type="cofactor">
    <cofactor evidence="1">
        <name>Mg(2+)</name>
        <dbReference type="ChEBI" id="CHEBI:18420"/>
    </cofactor>
</comment>
<comment type="subunit">
    <text evidence="2">Monomer.</text>
</comment>
<comment type="subcellular location">
    <subcellularLocation>
        <location evidence="2">Cytoplasm</location>
    </subcellularLocation>
</comment>
<comment type="alternative products">
    <event type="alternative splicing"/>
    <isoform>
        <id>P91917-1</id>
        <name evidence="6">a</name>
        <sequence type="displayed"/>
    </isoform>
    <isoform>
        <id>P91917-2</id>
        <name evidence="7">b</name>
        <sequence type="described" ref="VSP_061661"/>
    </isoform>
</comment>
<comment type="tissue specificity">
    <text evidence="4">Expressed in the nervous system, pharyngeal muscles and intestine (at protein level).</text>
</comment>
<comment type="similarity">
    <text evidence="2">Belongs to the TRAFAC class OBG-HflX-like GTPase superfamily. OBG GTPase family. YchF/OLA1 subfamily.</text>
</comment>
<keyword id="KW-0025">Alternative splicing</keyword>
<keyword id="KW-0067">ATP-binding</keyword>
<keyword id="KW-0963">Cytoplasm</keyword>
<keyword id="KW-0378">Hydrolase</keyword>
<keyword id="KW-0460">Magnesium</keyword>
<keyword id="KW-0479">Metal-binding</keyword>
<keyword id="KW-0547">Nucleotide-binding</keyword>
<keyword id="KW-1185">Reference proteome</keyword>
<evidence type="ECO:0000250" key="1"/>
<evidence type="ECO:0000255" key="2">
    <source>
        <dbReference type="HAMAP-Rule" id="MF_03167"/>
    </source>
</evidence>
<evidence type="ECO:0000255" key="3">
    <source>
        <dbReference type="PROSITE-ProRule" id="PRU01228"/>
    </source>
</evidence>
<evidence type="ECO:0000269" key="4">
    <source>
    </source>
</evidence>
<evidence type="ECO:0000305" key="5"/>
<evidence type="ECO:0000312" key="6">
    <source>
        <dbReference type="WormBase" id="W08E3.3a"/>
    </source>
</evidence>
<evidence type="ECO:0000312" key="7">
    <source>
        <dbReference type="WormBase" id="W08E3.3b"/>
    </source>
</evidence>
<gene>
    <name evidence="6" type="primary">ola-1</name>
    <name evidence="6" type="synonym">tag-210</name>
    <name evidence="6" type="ORF">W08E3.3</name>
</gene>
<proteinExistence type="evidence at protein level"/>
<organism>
    <name type="scientific">Caenorhabditis elegans</name>
    <dbReference type="NCBI Taxonomy" id="6239"/>
    <lineage>
        <taxon>Eukaryota</taxon>
        <taxon>Metazoa</taxon>
        <taxon>Ecdysozoa</taxon>
        <taxon>Nematoda</taxon>
        <taxon>Chromadorea</taxon>
        <taxon>Rhabditida</taxon>
        <taxon>Rhabditina</taxon>
        <taxon>Rhabditomorpha</taxon>
        <taxon>Rhabditoidea</taxon>
        <taxon>Rhabditidae</taxon>
        <taxon>Peloderinae</taxon>
        <taxon>Caenorhabditis</taxon>
    </lineage>
</organism>
<sequence>MPPKKNVVEEKPALIGRLGTNLKVGILGLPNVGKSTFFNVLTKSEAQAENFPFCTIDPNESRVAVQDDRFDWLVNHYKPASKVPAFLNVTDIAGLVKGASEGQGLGNAFLSHVSACDALFHLCRAFDDDDVTHVEGEVDPVRDLEIISNELFAKDLQFIDGPLDKVEKLFTRANDKTKKIEYDTLVRVKKCLEEKKPVRQELWNEKEIEILNKHLFLTAKPIVYLVNLSEKDYIRKKNKWLPKIKAWIDTNDAGAVLIPFSGAFELKLLDMPEDERQKYLKEQGVTSNLDKIVHTGYKALQLEYFFTSGEDEVKAWTIQVGTPAPKAAGRIHTDFEKGFIMAEVMKVADLIELGDEAKCKAGGKYRQQGKTYIVQDGDVIFFKFNAGAGLQAKKK</sequence>